<feature type="chain" id="PRO_0000148588" description="Argininosuccinate synthase">
    <location>
        <begin position="1"/>
        <end position="399"/>
    </location>
</feature>
<feature type="binding site" evidence="1">
    <location>
        <begin position="8"/>
        <end position="16"/>
    </location>
    <ligand>
        <name>ATP</name>
        <dbReference type="ChEBI" id="CHEBI:30616"/>
    </ligand>
</feature>
<feature type="binding site" evidence="1">
    <location>
        <position position="87"/>
    </location>
    <ligand>
        <name>L-citrulline</name>
        <dbReference type="ChEBI" id="CHEBI:57743"/>
    </ligand>
</feature>
<feature type="binding site" evidence="1">
    <location>
        <position position="117"/>
    </location>
    <ligand>
        <name>ATP</name>
        <dbReference type="ChEBI" id="CHEBI:30616"/>
    </ligand>
</feature>
<feature type="binding site" evidence="1">
    <location>
        <position position="119"/>
    </location>
    <ligand>
        <name>L-aspartate</name>
        <dbReference type="ChEBI" id="CHEBI:29991"/>
    </ligand>
</feature>
<feature type="binding site" evidence="1">
    <location>
        <position position="123"/>
    </location>
    <ligand>
        <name>L-aspartate</name>
        <dbReference type="ChEBI" id="CHEBI:29991"/>
    </ligand>
</feature>
<feature type="binding site" evidence="1">
    <location>
        <position position="123"/>
    </location>
    <ligand>
        <name>L-citrulline</name>
        <dbReference type="ChEBI" id="CHEBI:57743"/>
    </ligand>
</feature>
<feature type="binding site" evidence="1">
    <location>
        <position position="124"/>
    </location>
    <ligand>
        <name>L-aspartate</name>
        <dbReference type="ChEBI" id="CHEBI:29991"/>
    </ligand>
</feature>
<feature type="binding site" evidence="1">
    <location>
        <position position="127"/>
    </location>
    <ligand>
        <name>L-citrulline</name>
        <dbReference type="ChEBI" id="CHEBI:57743"/>
    </ligand>
</feature>
<feature type="binding site" evidence="1">
    <location>
        <position position="175"/>
    </location>
    <ligand>
        <name>L-citrulline</name>
        <dbReference type="ChEBI" id="CHEBI:57743"/>
    </ligand>
</feature>
<feature type="binding site" evidence="1">
    <location>
        <position position="259"/>
    </location>
    <ligand>
        <name>L-citrulline</name>
        <dbReference type="ChEBI" id="CHEBI:57743"/>
    </ligand>
</feature>
<feature type="binding site" evidence="1">
    <location>
        <position position="271"/>
    </location>
    <ligand>
        <name>L-citrulline</name>
        <dbReference type="ChEBI" id="CHEBI:57743"/>
    </ligand>
</feature>
<gene>
    <name evidence="1" type="primary">argG</name>
    <name type="ordered locus">DIP1173</name>
</gene>
<name>ASSY_CORDI</name>
<reference key="1">
    <citation type="journal article" date="2003" name="Nucleic Acids Res.">
        <title>The complete genome sequence and analysis of Corynebacterium diphtheriae NCTC13129.</title>
        <authorList>
            <person name="Cerdeno-Tarraga A.-M."/>
            <person name="Efstratiou A."/>
            <person name="Dover L.G."/>
            <person name="Holden M.T.G."/>
            <person name="Pallen M.J."/>
            <person name="Bentley S.D."/>
            <person name="Besra G.S."/>
            <person name="Churcher C.M."/>
            <person name="James K.D."/>
            <person name="De Zoysa A."/>
            <person name="Chillingworth T."/>
            <person name="Cronin A."/>
            <person name="Dowd L."/>
            <person name="Feltwell T."/>
            <person name="Hamlin N."/>
            <person name="Holroyd S."/>
            <person name="Jagels K."/>
            <person name="Moule S."/>
            <person name="Quail M.A."/>
            <person name="Rabbinowitsch E."/>
            <person name="Rutherford K.M."/>
            <person name="Thomson N.R."/>
            <person name="Unwin L."/>
            <person name="Whitehead S."/>
            <person name="Barrell B.G."/>
            <person name="Parkhill J."/>
        </authorList>
    </citation>
    <scope>NUCLEOTIDE SEQUENCE [LARGE SCALE GENOMIC DNA]</scope>
    <source>
        <strain>ATCC 700971 / NCTC 13129 / Biotype gravis</strain>
    </source>
</reference>
<dbReference type="EC" id="6.3.4.5" evidence="1"/>
<dbReference type="EMBL" id="BX248357">
    <property type="protein sequence ID" value="CAE49693.1"/>
    <property type="molecule type" value="Genomic_DNA"/>
</dbReference>
<dbReference type="RefSeq" id="WP_003851325.1">
    <property type="nucleotide sequence ID" value="NC_002935.2"/>
</dbReference>
<dbReference type="SMR" id="P61521"/>
<dbReference type="STRING" id="257309.DIP1173"/>
<dbReference type="KEGG" id="cdi:DIP1173"/>
<dbReference type="HOGENOM" id="CLU_032784_4_2_11"/>
<dbReference type="UniPathway" id="UPA00068">
    <property type="reaction ID" value="UER00113"/>
</dbReference>
<dbReference type="Proteomes" id="UP000002198">
    <property type="component" value="Chromosome"/>
</dbReference>
<dbReference type="GO" id="GO:0005737">
    <property type="term" value="C:cytoplasm"/>
    <property type="evidence" value="ECO:0007669"/>
    <property type="project" value="UniProtKB-SubCell"/>
</dbReference>
<dbReference type="GO" id="GO:0004055">
    <property type="term" value="F:argininosuccinate synthase activity"/>
    <property type="evidence" value="ECO:0007669"/>
    <property type="project" value="UniProtKB-UniRule"/>
</dbReference>
<dbReference type="GO" id="GO:0005524">
    <property type="term" value="F:ATP binding"/>
    <property type="evidence" value="ECO:0007669"/>
    <property type="project" value="UniProtKB-UniRule"/>
</dbReference>
<dbReference type="GO" id="GO:0000053">
    <property type="term" value="P:argininosuccinate metabolic process"/>
    <property type="evidence" value="ECO:0007669"/>
    <property type="project" value="TreeGrafter"/>
</dbReference>
<dbReference type="GO" id="GO:0006526">
    <property type="term" value="P:L-arginine biosynthetic process"/>
    <property type="evidence" value="ECO:0007669"/>
    <property type="project" value="UniProtKB-UniRule"/>
</dbReference>
<dbReference type="GO" id="GO:0000050">
    <property type="term" value="P:urea cycle"/>
    <property type="evidence" value="ECO:0007669"/>
    <property type="project" value="TreeGrafter"/>
</dbReference>
<dbReference type="CDD" id="cd01999">
    <property type="entry name" value="ASS"/>
    <property type="match status" value="1"/>
</dbReference>
<dbReference type="FunFam" id="3.40.50.620:FF:000038">
    <property type="entry name" value="Argininosuccinate synthase"/>
    <property type="match status" value="1"/>
</dbReference>
<dbReference type="FunFam" id="3.90.1260.10:FF:000007">
    <property type="entry name" value="Argininosuccinate synthase"/>
    <property type="match status" value="1"/>
</dbReference>
<dbReference type="Gene3D" id="3.90.1260.10">
    <property type="entry name" value="Argininosuccinate synthetase, chain A, domain 2"/>
    <property type="match status" value="1"/>
</dbReference>
<dbReference type="Gene3D" id="3.40.50.620">
    <property type="entry name" value="HUPs"/>
    <property type="match status" value="1"/>
</dbReference>
<dbReference type="Gene3D" id="1.20.5.470">
    <property type="entry name" value="Single helix bin"/>
    <property type="match status" value="1"/>
</dbReference>
<dbReference type="HAMAP" id="MF_00005">
    <property type="entry name" value="Arg_succ_synth_type1"/>
    <property type="match status" value="1"/>
</dbReference>
<dbReference type="InterPro" id="IPR048268">
    <property type="entry name" value="Arginosuc_syn_C"/>
</dbReference>
<dbReference type="InterPro" id="IPR048267">
    <property type="entry name" value="Arginosuc_syn_N"/>
</dbReference>
<dbReference type="InterPro" id="IPR001518">
    <property type="entry name" value="Arginosuc_synth"/>
</dbReference>
<dbReference type="InterPro" id="IPR018223">
    <property type="entry name" value="Arginosuc_synth_CS"/>
</dbReference>
<dbReference type="InterPro" id="IPR023434">
    <property type="entry name" value="Arginosuc_synth_type_1_subfam"/>
</dbReference>
<dbReference type="InterPro" id="IPR024074">
    <property type="entry name" value="AS_cat/multimer_dom_body"/>
</dbReference>
<dbReference type="InterPro" id="IPR014729">
    <property type="entry name" value="Rossmann-like_a/b/a_fold"/>
</dbReference>
<dbReference type="NCBIfam" id="TIGR00032">
    <property type="entry name" value="argG"/>
    <property type="match status" value="1"/>
</dbReference>
<dbReference type="NCBIfam" id="NF001770">
    <property type="entry name" value="PRK00509.1"/>
    <property type="match status" value="1"/>
</dbReference>
<dbReference type="PANTHER" id="PTHR11587">
    <property type="entry name" value="ARGININOSUCCINATE SYNTHASE"/>
    <property type="match status" value="1"/>
</dbReference>
<dbReference type="PANTHER" id="PTHR11587:SF2">
    <property type="entry name" value="ARGININOSUCCINATE SYNTHASE"/>
    <property type="match status" value="1"/>
</dbReference>
<dbReference type="Pfam" id="PF20979">
    <property type="entry name" value="Arginosuc_syn_C"/>
    <property type="match status" value="1"/>
</dbReference>
<dbReference type="Pfam" id="PF00764">
    <property type="entry name" value="Arginosuc_synth"/>
    <property type="match status" value="1"/>
</dbReference>
<dbReference type="SUPFAM" id="SSF52402">
    <property type="entry name" value="Adenine nucleotide alpha hydrolases-like"/>
    <property type="match status" value="1"/>
</dbReference>
<dbReference type="SUPFAM" id="SSF69864">
    <property type="entry name" value="Argininosuccinate synthetase, C-terminal domain"/>
    <property type="match status" value="1"/>
</dbReference>
<dbReference type="PROSITE" id="PS00564">
    <property type="entry name" value="ARGININOSUCCIN_SYN_1"/>
    <property type="match status" value="1"/>
</dbReference>
<dbReference type="PROSITE" id="PS00565">
    <property type="entry name" value="ARGININOSUCCIN_SYN_2"/>
    <property type="match status" value="1"/>
</dbReference>
<protein>
    <recommendedName>
        <fullName evidence="1">Argininosuccinate synthase</fullName>
        <ecNumber evidence="1">6.3.4.5</ecNumber>
    </recommendedName>
    <alternativeName>
        <fullName evidence="1">Citrulline--aspartate ligase</fullName>
    </alternativeName>
</protein>
<keyword id="KW-0028">Amino-acid biosynthesis</keyword>
<keyword id="KW-0055">Arginine biosynthesis</keyword>
<keyword id="KW-0067">ATP-binding</keyword>
<keyword id="KW-0963">Cytoplasm</keyword>
<keyword id="KW-0436">Ligase</keyword>
<keyword id="KW-0547">Nucleotide-binding</keyword>
<keyword id="KW-1185">Reference proteome</keyword>
<organism>
    <name type="scientific">Corynebacterium diphtheriae (strain ATCC 700971 / NCTC 13129 / Biotype gravis)</name>
    <dbReference type="NCBI Taxonomy" id="257309"/>
    <lineage>
        <taxon>Bacteria</taxon>
        <taxon>Bacillati</taxon>
        <taxon>Actinomycetota</taxon>
        <taxon>Actinomycetes</taxon>
        <taxon>Mycobacteriales</taxon>
        <taxon>Corynebacteriaceae</taxon>
        <taxon>Corynebacterium</taxon>
    </lineage>
</organism>
<sequence length="399" mass="44082">MTNRVVLAYSGGLDTSVAIPYLAKMTGGEVVAVSLDLGQGGEDMESVRQRALDCGAVESIVIDAKDEFANDYCLPTIKANGMYMKQYPLVSAISRPLIVKHLVEAAKKHGGTHVSHGCTGKGNDQVRFEVGFRNLAPELQIIAPARDYAWTRDKAIAFAEEINLPIEQSKKSPFSIDQNVWGRAVETGFLEDLWNPPTKDLYSYTEDPALGNAPDEIIISFKAGVPVAIDGRPVTVLEAIEEMNRRAGAQGIGRLDMVEDRLVGIKSREVYEAPGAIALITAHQAMEDVTIERELARYKRGIDARWSEEVYDGLWYAPLKRSLDAFIENTQEHVTGDIRMVMHAGKCTVNGRRSEHSLYDFDLATYDTGDTFDQTLAKGFVELHGLSSKISNKRDREAQ</sequence>
<evidence type="ECO:0000255" key="1">
    <source>
        <dbReference type="HAMAP-Rule" id="MF_00005"/>
    </source>
</evidence>
<proteinExistence type="inferred from homology"/>
<accession>P61521</accession>
<comment type="catalytic activity">
    <reaction evidence="1">
        <text>L-citrulline + L-aspartate + ATP = 2-(N(omega)-L-arginino)succinate + AMP + diphosphate + H(+)</text>
        <dbReference type="Rhea" id="RHEA:10932"/>
        <dbReference type="ChEBI" id="CHEBI:15378"/>
        <dbReference type="ChEBI" id="CHEBI:29991"/>
        <dbReference type="ChEBI" id="CHEBI:30616"/>
        <dbReference type="ChEBI" id="CHEBI:33019"/>
        <dbReference type="ChEBI" id="CHEBI:57472"/>
        <dbReference type="ChEBI" id="CHEBI:57743"/>
        <dbReference type="ChEBI" id="CHEBI:456215"/>
        <dbReference type="EC" id="6.3.4.5"/>
    </reaction>
</comment>
<comment type="pathway">
    <text evidence="1">Amino-acid biosynthesis; L-arginine biosynthesis; L-arginine from L-ornithine and carbamoyl phosphate: step 2/3.</text>
</comment>
<comment type="subunit">
    <text evidence="1">Homotetramer.</text>
</comment>
<comment type="subcellular location">
    <subcellularLocation>
        <location evidence="1">Cytoplasm</location>
    </subcellularLocation>
</comment>
<comment type="similarity">
    <text evidence="1">Belongs to the argininosuccinate synthase family. Type 1 subfamily.</text>
</comment>